<proteinExistence type="inferred from homology"/>
<dbReference type="EC" id="2.1.1.195" evidence="1"/>
<dbReference type="EMBL" id="CP001600">
    <property type="protein sequence ID" value="ACR69365.1"/>
    <property type="molecule type" value="Genomic_DNA"/>
</dbReference>
<dbReference type="RefSeq" id="WP_015871491.1">
    <property type="nucleotide sequence ID" value="NZ_CP169062.1"/>
</dbReference>
<dbReference type="SMR" id="C5BFT8"/>
<dbReference type="STRING" id="67780.B6E78_03500"/>
<dbReference type="GeneID" id="69539119"/>
<dbReference type="KEGG" id="eic:NT01EI_2190"/>
<dbReference type="PATRIC" id="fig|634503.3.peg.1955"/>
<dbReference type="HOGENOM" id="CLU_041273_1_0_6"/>
<dbReference type="OrthoDB" id="6439987at2"/>
<dbReference type="UniPathway" id="UPA00148">
    <property type="reaction ID" value="UER00227"/>
</dbReference>
<dbReference type="Proteomes" id="UP000001485">
    <property type="component" value="Chromosome"/>
</dbReference>
<dbReference type="GO" id="GO:0043780">
    <property type="term" value="F:cobalt-precorrin-5B C1-methyltransferase activity"/>
    <property type="evidence" value="ECO:0007669"/>
    <property type="project" value="RHEA"/>
</dbReference>
<dbReference type="GO" id="GO:0019251">
    <property type="term" value="P:anaerobic cobalamin biosynthetic process"/>
    <property type="evidence" value="ECO:0007669"/>
    <property type="project" value="UniProtKB-UniRule"/>
</dbReference>
<dbReference type="GO" id="GO:0032259">
    <property type="term" value="P:methylation"/>
    <property type="evidence" value="ECO:0007669"/>
    <property type="project" value="UniProtKB-KW"/>
</dbReference>
<dbReference type="Gene3D" id="3.30.2110.10">
    <property type="entry name" value="CbiD-like"/>
    <property type="match status" value="1"/>
</dbReference>
<dbReference type="HAMAP" id="MF_00787">
    <property type="entry name" value="CbiD"/>
    <property type="match status" value="1"/>
</dbReference>
<dbReference type="InterPro" id="IPR002748">
    <property type="entry name" value="CbiD"/>
</dbReference>
<dbReference type="InterPro" id="IPR036074">
    <property type="entry name" value="CbiD_sf"/>
</dbReference>
<dbReference type="NCBIfam" id="TIGR00312">
    <property type="entry name" value="cbiD"/>
    <property type="match status" value="1"/>
</dbReference>
<dbReference type="PANTHER" id="PTHR35863">
    <property type="entry name" value="COBALT-PRECORRIN-5B C(1)-METHYLTRANSFERASE"/>
    <property type="match status" value="1"/>
</dbReference>
<dbReference type="PANTHER" id="PTHR35863:SF1">
    <property type="entry name" value="COBALT-PRECORRIN-5B C(1)-METHYLTRANSFERASE"/>
    <property type="match status" value="1"/>
</dbReference>
<dbReference type="Pfam" id="PF01888">
    <property type="entry name" value="CbiD"/>
    <property type="match status" value="1"/>
</dbReference>
<dbReference type="PIRSF" id="PIRSF026782">
    <property type="entry name" value="CbiD"/>
    <property type="match status" value="1"/>
</dbReference>
<dbReference type="SUPFAM" id="SSF111342">
    <property type="entry name" value="CbiD-like"/>
    <property type="match status" value="1"/>
</dbReference>
<organism>
    <name type="scientific">Edwardsiella ictaluri (strain 93-146)</name>
    <dbReference type="NCBI Taxonomy" id="634503"/>
    <lineage>
        <taxon>Bacteria</taxon>
        <taxon>Pseudomonadati</taxon>
        <taxon>Pseudomonadota</taxon>
        <taxon>Gammaproteobacteria</taxon>
        <taxon>Enterobacterales</taxon>
        <taxon>Hafniaceae</taxon>
        <taxon>Edwardsiella</taxon>
    </lineage>
</organism>
<evidence type="ECO:0000255" key="1">
    <source>
        <dbReference type="HAMAP-Rule" id="MF_00787"/>
    </source>
</evidence>
<feature type="chain" id="PRO_1000212936" description="Cobalt-precorrin-5B C(1)-methyltransferase">
    <location>
        <begin position="1"/>
        <end position="379"/>
    </location>
</feature>
<name>CBID_EDWI9</name>
<accession>C5BFT8</accession>
<protein>
    <recommendedName>
        <fullName evidence="1">Cobalt-precorrin-5B C(1)-methyltransferase</fullName>
        <ecNumber evidence="1">2.1.1.195</ecNumber>
    </recommendedName>
    <alternativeName>
        <fullName evidence="1">Cobalt-precorrin-6A synthase</fullName>
    </alternativeName>
</protein>
<keyword id="KW-0169">Cobalamin biosynthesis</keyword>
<keyword id="KW-0489">Methyltransferase</keyword>
<keyword id="KW-0949">S-adenosyl-L-methionine</keyword>
<keyword id="KW-0808">Transferase</keyword>
<gene>
    <name evidence="1" type="primary">cbiD</name>
    <name type="ordered locus">NT01EI_2190</name>
</gene>
<sequence length="379" mass="40550">MSDRAFDTPVWHHGKALRKGYTTGSCATAAAKVAALMALRQQPIHQIAIVTPSGVTLNLSVESPHIEGEQAIAAIRKDGGDDVDATHGMLIFARVTLNDSGAISLSGGEGIGTVTRKGIGLPIGSAAINRTPRHTIESAVREAIGPTRGAAVEIFAPEGVARAQKTYNARLGILGGISIIGTTGIVTPMSEESWKRSLALTLEMKRAAGMTRVVLVPGNHGERFVREQMGIAADAVVTMSNFVGYMVEEAVRLGFRQIVLVGHPGKLIKVAAGIFHTHSHMADARMETLVAHLALLGAPLALLTRVRDCDTTEAAMEHIDAYGFQSLYDHLAARICQRVIERLRFTQNLPICDAILFSFDNRTLGSNRPVAAIVEDLRC</sequence>
<comment type="function">
    <text evidence="1">Catalyzes the methylation of C-1 in cobalt-precorrin-5B to form cobalt-precorrin-6A.</text>
</comment>
<comment type="catalytic activity">
    <reaction evidence="1">
        <text>Co-precorrin-5B + S-adenosyl-L-methionine = Co-precorrin-6A + S-adenosyl-L-homocysteine</text>
        <dbReference type="Rhea" id="RHEA:26285"/>
        <dbReference type="ChEBI" id="CHEBI:57856"/>
        <dbReference type="ChEBI" id="CHEBI:59789"/>
        <dbReference type="ChEBI" id="CHEBI:60063"/>
        <dbReference type="ChEBI" id="CHEBI:60064"/>
        <dbReference type="EC" id="2.1.1.195"/>
    </reaction>
</comment>
<comment type="pathway">
    <text evidence="1">Cofactor biosynthesis; adenosylcobalamin biosynthesis; cob(II)yrinate a,c-diamide from sirohydrochlorin (anaerobic route): step 6/10.</text>
</comment>
<comment type="similarity">
    <text evidence="1">Belongs to the CbiD family.</text>
</comment>
<reference key="1">
    <citation type="submission" date="2009-03" db="EMBL/GenBank/DDBJ databases">
        <title>Complete genome sequence of Edwardsiella ictaluri 93-146.</title>
        <authorList>
            <person name="Williams M.L."/>
            <person name="Gillaspy A.F."/>
            <person name="Dyer D.W."/>
            <person name="Thune R.L."/>
            <person name="Waldbieser G.C."/>
            <person name="Schuster S.C."/>
            <person name="Gipson J."/>
            <person name="Zaitshik J."/>
            <person name="Landry C."/>
            <person name="Lawrence M.L."/>
        </authorList>
    </citation>
    <scope>NUCLEOTIDE SEQUENCE [LARGE SCALE GENOMIC DNA]</scope>
    <source>
        <strain>93-146</strain>
    </source>
</reference>